<gene>
    <name type="ordered locus">MG432</name>
</gene>
<name>Y432_MYCGE</name>
<protein>
    <recommendedName>
        <fullName>Uncharacterized protein MG432</fullName>
    </recommendedName>
</protein>
<reference key="1">
    <citation type="journal article" date="1995" name="Science">
        <title>The minimal gene complement of Mycoplasma genitalium.</title>
        <authorList>
            <person name="Fraser C.M."/>
            <person name="Gocayne J.D."/>
            <person name="White O."/>
            <person name="Adams M.D."/>
            <person name="Clayton R.A."/>
            <person name="Fleischmann R.D."/>
            <person name="Bult C.J."/>
            <person name="Kerlavage A.R."/>
            <person name="Sutton G.G."/>
            <person name="Kelley J.M."/>
            <person name="Fritchman J.L."/>
            <person name="Weidman J.F."/>
            <person name="Small K.V."/>
            <person name="Sandusky M."/>
            <person name="Fuhrmann J.L."/>
            <person name="Nguyen D.T."/>
            <person name="Utterback T.R."/>
            <person name="Saudek D.M."/>
            <person name="Phillips C.A."/>
            <person name="Merrick J.M."/>
            <person name="Tomb J.-F."/>
            <person name="Dougherty B.A."/>
            <person name="Bott K.F."/>
            <person name="Hu P.-C."/>
            <person name="Lucier T.S."/>
            <person name="Peterson S.N."/>
            <person name="Smith H.O."/>
            <person name="Hutchison C.A. III"/>
            <person name="Venter J.C."/>
        </authorList>
    </citation>
    <scope>NUCLEOTIDE SEQUENCE [LARGE SCALE GENOMIC DNA]</scope>
    <source>
        <strain>ATCC 33530 / DSM 19775 / NCTC 10195 / G37</strain>
    </source>
</reference>
<comment type="subcellular location">
    <subcellularLocation>
        <location evidence="2">Cell membrane</location>
        <topology evidence="2">Multi-pass membrane protein</topology>
    </subcellularLocation>
</comment>
<accession>Q49432</accession>
<sequence length="398" mass="45719">MKDKNIKISGNFVRIHLSGSFLKFQSIYNLKKLYLQLVILTIVAFFWGLLGVIFVQFSGLYDIGMASISQGLARLVNFFITSQNINVDSATIFNAIFWLTQILFNVPFFIFGWFKISKKFTLLTLYFVAVSNLFGFFFSYIPGIDNFFLFANLTTAKDGGFENLINEKGVQLIFWEKSAEKQVSLLFYGLIWGFLQAVFYSVILIIDASTGGLDFLAFWYSEKKYKDIGGILMLINTVSFIIGYVIGTYLTGSLSVQSYVGDDKHQPFGVAFFLSPNLVFTLLMNIVLGLFTSFYFPKYQFVKVEVYGKHIEKIRNYLLDNQQWFSITMFEAEGGYSRQKTQVLVTNCLLIKAAKLLEDVRKFDRDALFSITFIKKLDGYIYDRRTNKQTKHGTENKS</sequence>
<evidence type="ECO:0000255" key="1"/>
<evidence type="ECO:0000305" key="2"/>
<proteinExistence type="predicted"/>
<organism>
    <name type="scientific">Mycoplasma genitalium (strain ATCC 33530 / DSM 19775 / NCTC 10195 / G37)</name>
    <name type="common">Mycoplasmoides genitalium</name>
    <dbReference type="NCBI Taxonomy" id="243273"/>
    <lineage>
        <taxon>Bacteria</taxon>
        <taxon>Bacillati</taxon>
        <taxon>Mycoplasmatota</taxon>
        <taxon>Mycoplasmoidales</taxon>
        <taxon>Mycoplasmoidaceae</taxon>
        <taxon>Mycoplasmoides</taxon>
    </lineage>
</organism>
<feature type="chain" id="PRO_0000210610" description="Uncharacterized protein MG432">
    <location>
        <begin position="1"/>
        <end position="398"/>
    </location>
</feature>
<feature type="transmembrane region" description="Helical" evidence="1">
    <location>
        <begin position="37"/>
        <end position="57"/>
    </location>
</feature>
<feature type="transmembrane region" description="Helical" evidence="1">
    <location>
        <begin position="92"/>
        <end position="112"/>
    </location>
</feature>
<feature type="transmembrane region" description="Helical" evidence="1">
    <location>
        <begin position="122"/>
        <end position="142"/>
    </location>
</feature>
<feature type="transmembrane region" description="Helical" evidence="1">
    <location>
        <begin position="186"/>
        <end position="206"/>
    </location>
</feature>
<feature type="transmembrane region" description="Helical" evidence="1">
    <location>
        <begin position="228"/>
        <end position="248"/>
    </location>
</feature>
<feature type="transmembrane region" description="Helical" evidence="1">
    <location>
        <begin position="268"/>
        <end position="288"/>
    </location>
</feature>
<dbReference type="EMBL" id="L43967">
    <property type="protein sequence ID" value="AAC72453.1"/>
    <property type="molecule type" value="Genomic_DNA"/>
</dbReference>
<dbReference type="PIR" id="G64247">
    <property type="entry name" value="G64247"/>
</dbReference>
<dbReference type="RefSeq" id="WP_009885601.1">
    <property type="nucleotide sequence ID" value="NC_000908.2"/>
</dbReference>
<dbReference type="SMR" id="Q49432"/>
<dbReference type="FunCoup" id="Q49432">
    <property type="interactions" value="19"/>
</dbReference>
<dbReference type="STRING" id="243273.MG_432"/>
<dbReference type="GeneID" id="88282613"/>
<dbReference type="KEGG" id="mge:MG_432"/>
<dbReference type="eggNOG" id="COG1284">
    <property type="taxonomic scope" value="Bacteria"/>
</dbReference>
<dbReference type="HOGENOM" id="CLU_043038_0_0_14"/>
<dbReference type="InParanoid" id="Q49432"/>
<dbReference type="OrthoDB" id="387512at2"/>
<dbReference type="BioCyc" id="MGEN243273:G1GJ2-526-MONOMER"/>
<dbReference type="Proteomes" id="UP000000807">
    <property type="component" value="Chromosome"/>
</dbReference>
<dbReference type="GO" id="GO:0005886">
    <property type="term" value="C:plasma membrane"/>
    <property type="evidence" value="ECO:0007669"/>
    <property type="project" value="UniProtKB-SubCell"/>
</dbReference>
<dbReference type="Gene3D" id="3.30.70.120">
    <property type="match status" value="1"/>
</dbReference>
<dbReference type="InterPro" id="IPR019264">
    <property type="entry name" value="DUF2179"/>
</dbReference>
<dbReference type="InterPro" id="IPR015867">
    <property type="entry name" value="N-reg_PII/ATP_PRibTrfase_C"/>
</dbReference>
<dbReference type="InterPro" id="IPR051461">
    <property type="entry name" value="UPF0750_membrane"/>
</dbReference>
<dbReference type="InterPro" id="IPR003740">
    <property type="entry name" value="YitT"/>
</dbReference>
<dbReference type="PANTHER" id="PTHR33545:SF5">
    <property type="entry name" value="UPF0750 MEMBRANE PROTEIN YITT"/>
    <property type="match status" value="1"/>
</dbReference>
<dbReference type="PANTHER" id="PTHR33545">
    <property type="entry name" value="UPF0750 MEMBRANE PROTEIN YITT-RELATED"/>
    <property type="match status" value="1"/>
</dbReference>
<dbReference type="Pfam" id="PF10035">
    <property type="entry name" value="DUF2179"/>
    <property type="match status" value="1"/>
</dbReference>
<dbReference type="Pfam" id="PF02588">
    <property type="entry name" value="YitT_membrane"/>
    <property type="match status" value="1"/>
</dbReference>
<keyword id="KW-1003">Cell membrane</keyword>
<keyword id="KW-0472">Membrane</keyword>
<keyword id="KW-1185">Reference proteome</keyword>
<keyword id="KW-0812">Transmembrane</keyword>
<keyword id="KW-1133">Transmembrane helix</keyword>